<gene>
    <name evidence="1" type="primary">leuA</name>
    <name type="ordered locus">SAB1942</name>
</gene>
<sequence>MSSHIQIFDTTLRDGEQTPGVNFTFDERLRIALQLEKWGVDVIEAGFPASSTGSFKSVQAIAQTLTTTAVCGLARCKKSDIDAVYEATKDAAKPVVHVFIATSPIHLEHKLKMSQEDVLASIKEHVTYAKQLFDVVQFSPEDATRTELPFLVKCVQTAVDAGATVINIPDTVGYSYHDEYAHIFKTLTESATSSNEIIYSAHCHDDLGMAVSNSLAAIEGGARRIEGTVNGIGERAGNAALEEVALALYVRNDHYGAQTALNLEETKKTSDLISRYAGIRVPRNKAIVGQNAFSHESGIHQDGVLKHRETYEIMTPQLVGVSMTELPLGKLSGKHAFSEKLKALGYDIDKEAQIDLFKQFKAIADKKKSVSDRDIHAIIQGSEHEHQALYKLETLQLQYVSSGLQSAVVVVKDKEGHIYQDSSIGTGSIVAIYNAVDRIFQKETELIDYRINSVTEGTDAQAEVHVNLLIEGKTVNGFGIDHDILQASCKAYVEAHAKFAAENVEKVGN</sequence>
<proteinExistence type="inferred from homology"/>
<organism>
    <name type="scientific">Staphylococcus aureus (strain bovine RF122 / ET3-1)</name>
    <dbReference type="NCBI Taxonomy" id="273036"/>
    <lineage>
        <taxon>Bacteria</taxon>
        <taxon>Bacillati</taxon>
        <taxon>Bacillota</taxon>
        <taxon>Bacilli</taxon>
        <taxon>Bacillales</taxon>
        <taxon>Staphylococcaceae</taxon>
        <taxon>Staphylococcus</taxon>
    </lineage>
</organism>
<reference key="1">
    <citation type="journal article" date="2007" name="PLoS ONE">
        <title>Molecular correlates of host specialization in Staphylococcus aureus.</title>
        <authorList>
            <person name="Herron-Olson L."/>
            <person name="Fitzgerald J.R."/>
            <person name="Musser J.M."/>
            <person name="Kapur V."/>
        </authorList>
    </citation>
    <scope>NUCLEOTIDE SEQUENCE [LARGE SCALE GENOMIC DNA]</scope>
    <source>
        <strain>bovine RF122 / ET3-1</strain>
    </source>
</reference>
<feature type="chain" id="PRO_1000149306" description="2-isopropylmalate synthase">
    <location>
        <begin position="1"/>
        <end position="509"/>
    </location>
</feature>
<feature type="domain" description="Pyruvate carboxyltransferase" evidence="1">
    <location>
        <begin position="5"/>
        <end position="267"/>
    </location>
</feature>
<feature type="region of interest" description="Regulatory domain" evidence="1">
    <location>
        <begin position="391"/>
        <end position="509"/>
    </location>
</feature>
<feature type="binding site" evidence="1">
    <location>
        <position position="14"/>
    </location>
    <ligand>
        <name>Mn(2+)</name>
        <dbReference type="ChEBI" id="CHEBI:29035"/>
    </ligand>
</feature>
<feature type="binding site" evidence="1">
    <location>
        <position position="202"/>
    </location>
    <ligand>
        <name>Mn(2+)</name>
        <dbReference type="ChEBI" id="CHEBI:29035"/>
    </ligand>
</feature>
<feature type="binding site" evidence="1">
    <location>
        <position position="204"/>
    </location>
    <ligand>
        <name>Mn(2+)</name>
        <dbReference type="ChEBI" id="CHEBI:29035"/>
    </ligand>
</feature>
<feature type="binding site" evidence="1">
    <location>
        <position position="238"/>
    </location>
    <ligand>
        <name>Mn(2+)</name>
        <dbReference type="ChEBI" id="CHEBI:29035"/>
    </ligand>
</feature>
<protein>
    <recommendedName>
        <fullName evidence="1">2-isopropylmalate synthase</fullName>
        <ecNumber evidence="1">2.3.3.13</ecNumber>
    </recommendedName>
    <alternativeName>
        <fullName evidence="1">Alpha-IPM synthase</fullName>
    </alternativeName>
    <alternativeName>
        <fullName evidence="1">Alpha-isopropylmalate synthase</fullName>
    </alternativeName>
</protein>
<keyword id="KW-0028">Amino-acid biosynthesis</keyword>
<keyword id="KW-0100">Branched-chain amino acid biosynthesis</keyword>
<keyword id="KW-0963">Cytoplasm</keyword>
<keyword id="KW-0432">Leucine biosynthesis</keyword>
<keyword id="KW-0464">Manganese</keyword>
<keyword id="KW-0479">Metal-binding</keyword>
<keyword id="KW-0808">Transferase</keyword>
<comment type="function">
    <text evidence="1">Catalyzes the condensation of the acetyl group of acetyl-CoA with 3-methyl-2-oxobutanoate (2-ketoisovalerate) to form 3-carboxy-3-hydroxy-4-methylpentanoate (2-isopropylmalate).</text>
</comment>
<comment type="catalytic activity">
    <reaction evidence="1">
        <text>3-methyl-2-oxobutanoate + acetyl-CoA + H2O = (2S)-2-isopropylmalate + CoA + H(+)</text>
        <dbReference type="Rhea" id="RHEA:21524"/>
        <dbReference type="ChEBI" id="CHEBI:1178"/>
        <dbReference type="ChEBI" id="CHEBI:11851"/>
        <dbReference type="ChEBI" id="CHEBI:15377"/>
        <dbReference type="ChEBI" id="CHEBI:15378"/>
        <dbReference type="ChEBI" id="CHEBI:57287"/>
        <dbReference type="ChEBI" id="CHEBI:57288"/>
        <dbReference type="EC" id="2.3.3.13"/>
    </reaction>
</comment>
<comment type="cofactor">
    <cofactor evidence="1">
        <name>Mn(2+)</name>
        <dbReference type="ChEBI" id="CHEBI:29035"/>
    </cofactor>
</comment>
<comment type="pathway">
    <text evidence="1">Amino-acid biosynthesis; L-leucine biosynthesis; L-leucine from 3-methyl-2-oxobutanoate: step 1/4.</text>
</comment>
<comment type="subunit">
    <text evidence="1">Homodimer.</text>
</comment>
<comment type="subcellular location">
    <subcellularLocation>
        <location evidence="1">Cytoplasm</location>
    </subcellularLocation>
</comment>
<comment type="similarity">
    <text evidence="1">Belongs to the alpha-IPM synthase/homocitrate synthase family. LeuA type 1 subfamily.</text>
</comment>
<evidence type="ECO:0000255" key="1">
    <source>
        <dbReference type="HAMAP-Rule" id="MF_01025"/>
    </source>
</evidence>
<name>LEU1_STAAB</name>
<dbReference type="EC" id="2.3.3.13" evidence="1"/>
<dbReference type="EMBL" id="AJ938182">
    <property type="protein sequence ID" value="CAI81631.1"/>
    <property type="molecule type" value="Genomic_DNA"/>
</dbReference>
<dbReference type="RefSeq" id="WP_000094569.1">
    <property type="nucleotide sequence ID" value="NC_007622.1"/>
</dbReference>
<dbReference type="SMR" id="Q2YUF2"/>
<dbReference type="KEGG" id="sab:SAB1942"/>
<dbReference type="HOGENOM" id="CLU_022158_0_1_9"/>
<dbReference type="UniPathway" id="UPA00048">
    <property type="reaction ID" value="UER00070"/>
</dbReference>
<dbReference type="GO" id="GO:0005737">
    <property type="term" value="C:cytoplasm"/>
    <property type="evidence" value="ECO:0007669"/>
    <property type="project" value="UniProtKB-SubCell"/>
</dbReference>
<dbReference type="GO" id="GO:0003852">
    <property type="term" value="F:2-isopropylmalate synthase activity"/>
    <property type="evidence" value="ECO:0007669"/>
    <property type="project" value="UniProtKB-UniRule"/>
</dbReference>
<dbReference type="GO" id="GO:0003985">
    <property type="term" value="F:acetyl-CoA C-acetyltransferase activity"/>
    <property type="evidence" value="ECO:0007669"/>
    <property type="project" value="UniProtKB-UniRule"/>
</dbReference>
<dbReference type="GO" id="GO:0030145">
    <property type="term" value="F:manganese ion binding"/>
    <property type="evidence" value="ECO:0007669"/>
    <property type="project" value="UniProtKB-UniRule"/>
</dbReference>
<dbReference type="GO" id="GO:0009098">
    <property type="term" value="P:L-leucine biosynthetic process"/>
    <property type="evidence" value="ECO:0007669"/>
    <property type="project" value="UniProtKB-UniRule"/>
</dbReference>
<dbReference type="CDD" id="cd07940">
    <property type="entry name" value="DRE_TIM_IPMS"/>
    <property type="match status" value="1"/>
</dbReference>
<dbReference type="FunFam" id="1.10.238.260:FF:000001">
    <property type="entry name" value="2-isopropylmalate synthase"/>
    <property type="match status" value="1"/>
</dbReference>
<dbReference type="FunFam" id="3.20.20.70:FF:000010">
    <property type="entry name" value="2-isopropylmalate synthase"/>
    <property type="match status" value="1"/>
</dbReference>
<dbReference type="FunFam" id="3.30.160.270:FF:000003">
    <property type="entry name" value="2-isopropylmalate synthase"/>
    <property type="match status" value="1"/>
</dbReference>
<dbReference type="Gene3D" id="1.10.238.260">
    <property type="match status" value="1"/>
</dbReference>
<dbReference type="Gene3D" id="3.30.160.270">
    <property type="match status" value="1"/>
</dbReference>
<dbReference type="Gene3D" id="3.20.20.70">
    <property type="entry name" value="Aldolase class I"/>
    <property type="match status" value="1"/>
</dbReference>
<dbReference type="HAMAP" id="MF_01025">
    <property type="entry name" value="LeuA_type1"/>
    <property type="match status" value="1"/>
</dbReference>
<dbReference type="InterPro" id="IPR050073">
    <property type="entry name" value="2-IPM_HCS-like"/>
</dbReference>
<dbReference type="InterPro" id="IPR013709">
    <property type="entry name" value="2-isopropylmalate_synth_dimer"/>
</dbReference>
<dbReference type="InterPro" id="IPR013785">
    <property type="entry name" value="Aldolase_TIM"/>
</dbReference>
<dbReference type="InterPro" id="IPR054691">
    <property type="entry name" value="LeuA/HCS_post-cat"/>
</dbReference>
<dbReference type="InterPro" id="IPR036230">
    <property type="entry name" value="LeuA_allosteric_dom_sf"/>
</dbReference>
<dbReference type="InterPro" id="IPR005671">
    <property type="entry name" value="LeuA_bact_synth"/>
</dbReference>
<dbReference type="InterPro" id="IPR000891">
    <property type="entry name" value="PYR_CT"/>
</dbReference>
<dbReference type="NCBIfam" id="TIGR00973">
    <property type="entry name" value="leuA_bact"/>
    <property type="match status" value="1"/>
</dbReference>
<dbReference type="NCBIfam" id="NF002086">
    <property type="entry name" value="PRK00915.1-3"/>
    <property type="match status" value="1"/>
</dbReference>
<dbReference type="NCBIfam" id="NF002088">
    <property type="entry name" value="PRK00915.1-5"/>
    <property type="match status" value="1"/>
</dbReference>
<dbReference type="PANTHER" id="PTHR10277:SF9">
    <property type="entry name" value="2-ISOPROPYLMALATE SYNTHASE 1, CHLOROPLASTIC-RELATED"/>
    <property type="match status" value="1"/>
</dbReference>
<dbReference type="PANTHER" id="PTHR10277">
    <property type="entry name" value="HOMOCITRATE SYNTHASE-RELATED"/>
    <property type="match status" value="1"/>
</dbReference>
<dbReference type="Pfam" id="PF22617">
    <property type="entry name" value="HCS_D2"/>
    <property type="match status" value="1"/>
</dbReference>
<dbReference type="Pfam" id="PF00682">
    <property type="entry name" value="HMGL-like"/>
    <property type="match status" value="1"/>
</dbReference>
<dbReference type="Pfam" id="PF08502">
    <property type="entry name" value="LeuA_dimer"/>
    <property type="match status" value="1"/>
</dbReference>
<dbReference type="SMART" id="SM00917">
    <property type="entry name" value="LeuA_dimer"/>
    <property type="match status" value="1"/>
</dbReference>
<dbReference type="SUPFAM" id="SSF110921">
    <property type="entry name" value="2-isopropylmalate synthase LeuA, allosteric (dimerisation) domain"/>
    <property type="match status" value="1"/>
</dbReference>
<dbReference type="SUPFAM" id="SSF51569">
    <property type="entry name" value="Aldolase"/>
    <property type="match status" value="1"/>
</dbReference>
<dbReference type="PROSITE" id="PS50991">
    <property type="entry name" value="PYR_CT"/>
    <property type="match status" value="1"/>
</dbReference>
<accession>Q2YUF2</accession>